<reference evidence="10" key="1">
    <citation type="journal article" date="2000" name="Genes Genet. Syst.">
        <title>Identification and characterization of Thermus thermophilus HB8 RuvA protein, the subunit of the RuvAB protein complex that promotes branch migration of Holliday junctions.</title>
        <authorList>
            <person name="Ohnishi T."/>
            <person name="Iwasaki H."/>
            <person name="Ishino Y."/>
            <person name="Kuramitsu S."/>
            <person name="Nakata A."/>
            <person name="Shinagawa H."/>
        </authorList>
    </citation>
    <scope>NUCLEOTIDE SEQUENCE [GENOMIC DNA]</scope>
    <scope>FUNCTION</scope>
    <scope>BIOPHYSICOCHEMICAL PROPERTIES</scope>
    <scope>SUBUNIT</scope>
    <scope>DNA-BINDING</scope>
    <source>
        <strain>ATCC 27634 / DSM 579 / HB8</strain>
    </source>
</reference>
<reference evidence="11" key="2">
    <citation type="submission" date="2004-11" db="EMBL/GenBank/DDBJ databases">
        <title>Complete genome sequence of Thermus thermophilus HB8.</title>
        <authorList>
            <person name="Masui R."/>
            <person name="Kurokawa K."/>
            <person name="Nakagawa N."/>
            <person name="Tokunaga F."/>
            <person name="Koyama Y."/>
            <person name="Shibata T."/>
            <person name="Oshima T."/>
            <person name="Yokoyama S."/>
            <person name="Yasunaga T."/>
            <person name="Kuramitsu S."/>
        </authorList>
    </citation>
    <scope>NUCLEOTIDE SEQUENCE [LARGE SCALE GENOMIC DNA]</scope>
    <source>
        <strain>ATCC 27634 / DSM 579 / HB8</strain>
    </source>
</reference>
<reference key="3">
    <citation type="journal article" date="2008" name="Biochem. Biophys. Res. Commun.">
        <title>Electron microscopic single particle analysis of a tetrameric RuvA/RuvB/Holliday junction DNA complex.</title>
        <authorList>
            <person name="Mayanagi K."/>
            <person name="Fujiwara Y."/>
            <person name="Miyata T."/>
            <person name="Morikawa K."/>
        </authorList>
    </citation>
    <scope>SUBUNIT</scope>
    <scope>MUTAGENESIS OF 125-LEU-GLU-126</scope>
</reference>
<reference key="4">
    <citation type="journal article" date="2008" name="Biochem. Biophys. Res. Commun.">
        <title>Functional significance of octameric RuvA for a branch migration complex from Thermus thermophilus.</title>
        <authorList>
            <person name="Fujiwara Y."/>
            <person name="Mayanagi K."/>
            <person name="Morikawa K."/>
        </authorList>
    </citation>
    <scope>FUNCTION</scope>
    <scope>SUBUNIT</scope>
    <scope>MUTAGENESIS OF 121-GLU--GLU-126</scope>
</reference>
<reference evidence="12 13" key="5">
    <citation type="journal article" date="2002" name="Mol. Cell">
        <title>Crystal structure of the RuvA-RuvB complex: a structural basis for the Holliday junction migrating motor machinery.</title>
        <authorList>
            <person name="Yamada K."/>
            <person name="Miyata T."/>
            <person name="Tsuchiya D."/>
            <person name="Oyama T."/>
            <person name="Fujiwara Y."/>
            <person name="Ohnishi T."/>
            <person name="Iwasaki H."/>
            <person name="Shinagawa H."/>
            <person name="Ariyoshi M."/>
            <person name="Mayanagi K."/>
            <person name="Morikawa K."/>
        </authorList>
    </citation>
    <scope>X-RAY CRYSTALLOGRAPHY (3.20 ANGSTROMS) IN COMPLEX WITH RUVB</scope>
    <scope>X-RAY CRYSTALLOGRAPHY (3.20 ANGSTROMS) OF 130-191 IN COMPLEX WITH RUVB AND ATP ANALOG</scope>
    <scope>SUBUNIT</scope>
    <scope>DOMAIN</scope>
    <source>
        <strain>ATCC 27634 / DSM 579 / HB8</strain>
    </source>
</reference>
<feature type="chain" id="PRO_0000094701" description="Holliday junction branch migration complex subunit RuvA">
    <location>
        <begin position="1"/>
        <end position="191"/>
    </location>
</feature>
<feature type="region of interest" description="Domain I" evidence="2 4">
    <location>
        <begin position="1"/>
        <end position="63"/>
    </location>
</feature>
<feature type="region of interest" description="Domain II" evidence="4">
    <location>
        <begin position="64"/>
        <end position="128"/>
    </location>
</feature>
<feature type="region of interest" description="Flexible linker" evidence="4">
    <location>
        <begin position="132"/>
        <end position="143"/>
    </location>
</feature>
<feature type="region of interest" description="Domain III" evidence="4">
    <location>
        <begin position="144"/>
        <end position="191"/>
    </location>
</feature>
<feature type="short sequence motif" description="Acidic pin" evidence="1">
    <location>
        <begin position="54"/>
        <end position="55"/>
    </location>
</feature>
<feature type="mutagenesis site" description="Only one RuvA tetramer is found in the RuvA-RuvB-HJ complex, cannot form octameric RuvA, poor branch migration, poorly stimulates RuvB ATPase." evidence="6">
    <original>ERIALE</original>
    <variation>KRIADK</variation>
    <location>
        <begin position="121"/>
        <end position="126"/>
    </location>
</feature>
<feature type="mutagenesis site" description="Only one RuvA tetramer is found in the RuvA-RuvB-HJ complex, cannot form octameric RuvA. Binds HJ DNA, poor branch migration, poorly stimulates RuvB ATPase." evidence="5 6">
    <original>LE</original>
    <variation>DK</variation>
    <location>
        <begin position="125"/>
        <end position="126"/>
    </location>
</feature>
<feature type="strand" evidence="14">
    <location>
        <begin position="4"/>
        <end position="12"/>
    </location>
</feature>
<feature type="strand" evidence="14">
    <location>
        <begin position="14"/>
        <end position="20"/>
    </location>
</feature>
<feature type="strand" evidence="14">
    <location>
        <begin position="22"/>
        <end position="29"/>
    </location>
</feature>
<feature type="helix" evidence="14">
    <location>
        <begin position="32"/>
        <end position="37"/>
    </location>
</feature>
<feature type="strand" evidence="14">
    <location>
        <begin position="42"/>
        <end position="48"/>
    </location>
</feature>
<feature type="strand" evidence="14">
    <location>
        <begin position="59"/>
        <end position="64"/>
    </location>
</feature>
<feature type="helix" evidence="14">
    <location>
        <begin position="65"/>
        <end position="75"/>
    </location>
</feature>
<feature type="strand" evidence="14">
    <location>
        <begin position="76"/>
        <end position="78"/>
    </location>
</feature>
<feature type="helix" evidence="14">
    <location>
        <begin position="82"/>
        <end position="91"/>
    </location>
</feature>
<feature type="helix" evidence="14">
    <location>
        <begin position="94"/>
        <end position="102"/>
    </location>
</feature>
<feature type="helix" evidence="14">
    <location>
        <begin position="106"/>
        <end position="109"/>
    </location>
</feature>
<feature type="helix" evidence="14">
    <location>
        <begin position="117"/>
        <end position="127"/>
    </location>
</feature>
<feature type="turn" evidence="14">
    <location>
        <begin position="128"/>
        <end position="130"/>
    </location>
</feature>
<feature type="helix" evidence="15">
    <location>
        <begin position="144"/>
        <end position="155"/>
    </location>
</feature>
<feature type="helix" evidence="15">
    <location>
        <begin position="160"/>
        <end position="173"/>
    </location>
</feature>
<feature type="helix" evidence="15">
    <location>
        <begin position="179"/>
        <end position="187"/>
    </location>
</feature>
<dbReference type="EMBL" id="AB048605">
    <property type="protein sequence ID" value="BAB18786.1"/>
    <property type="molecule type" value="Genomic_DNA"/>
</dbReference>
<dbReference type="EMBL" id="AP008226">
    <property type="protein sequence ID" value="BAD70114.1"/>
    <property type="molecule type" value="Genomic_DNA"/>
</dbReference>
<dbReference type="RefSeq" id="WP_011174059.1">
    <property type="nucleotide sequence ID" value="NC_006461.1"/>
</dbReference>
<dbReference type="RefSeq" id="YP_143557.1">
    <property type="nucleotide sequence ID" value="NC_006461.1"/>
</dbReference>
<dbReference type="PDB" id="1IXR">
    <property type="method" value="X-ray"/>
    <property type="resolution" value="3.30 A"/>
    <property type="chains" value="A/B=1-191"/>
</dbReference>
<dbReference type="PDB" id="1IXS">
    <property type="method" value="X-ray"/>
    <property type="resolution" value="3.20 A"/>
    <property type="chains" value="A=130-191"/>
</dbReference>
<dbReference type="PDB" id="8GH8">
    <property type="method" value="EM"/>
    <property type="resolution" value="4.30 A"/>
    <property type="chains" value="A/B/C/D=1-140"/>
</dbReference>
<dbReference type="PDBsum" id="1IXR"/>
<dbReference type="PDBsum" id="1IXS"/>
<dbReference type="PDBsum" id="8GH8"/>
<dbReference type="EMDB" id="EMD-40036"/>
<dbReference type="SMR" id="Q9F1Q3"/>
<dbReference type="IntAct" id="Q9F1Q3">
    <property type="interactions" value="1"/>
</dbReference>
<dbReference type="EnsemblBacteria" id="BAD70114">
    <property type="protein sequence ID" value="BAD70114"/>
    <property type="gene ID" value="BAD70114"/>
</dbReference>
<dbReference type="GeneID" id="3168157"/>
<dbReference type="KEGG" id="ttj:TTHA0291"/>
<dbReference type="PATRIC" id="fig|300852.9.peg.291"/>
<dbReference type="eggNOG" id="COG0632">
    <property type="taxonomic scope" value="Bacteria"/>
</dbReference>
<dbReference type="HOGENOM" id="CLU_087936_3_0_0"/>
<dbReference type="PhylomeDB" id="Q9F1Q3"/>
<dbReference type="EvolutionaryTrace" id="Q9F1Q3"/>
<dbReference type="Proteomes" id="UP000000532">
    <property type="component" value="Chromosome"/>
</dbReference>
<dbReference type="GO" id="GO:0005737">
    <property type="term" value="C:cytoplasm"/>
    <property type="evidence" value="ECO:0007669"/>
    <property type="project" value="UniProtKB-SubCell"/>
</dbReference>
<dbReference type="GO" id="GO:0009379">
    <property type="term" value="C:Holliday junction helicase complex"/>
    <property type="evidence" value="ECO:0007669"/>
    <property type="project" value="InterPro"/>
</dbReference>
<dbReference type="GO" id="GO:0048476">
    <property type="term" value="C:Holliday junction resolvase complex"/>
    <property type="evidence" value="ECO:0007669"/>
    <property type="project" value="UniProtKB-UniRule"/>
</dbReference>
<dbReference type="GO" id="GO:0005524">
    <property type="term" value="F:ATP binding"/>
    <property type="evidence" value="ECO:0007669"/>
    <property type="project" value="InterPro"/>
</dbReference>
<dbReference type="GO" id="GO:0000400">
    <property type="term" value="F:four-way junction DNA binding"/>
    <property type="evidence" value="ECO:0007669"/>
    <property type="project" value="UniProtKB-UniRule"/>
</dbReference>
<dbReference type="GO" id="GO:0009378">
    <property type="term" value="F:four-way junction helicase activity"/>
    <property type="evidence" value="ECO:0007669"/>
    <property type="project" value="InterPro"/>
</dbReference>
<dbReference type="GO" id="GO:0006310">
    <property type="term" value="P:DNA recombination"/>
    <property type="evidence" value="ECO:0007669"/>
    <property type="project" value="UniProtKB-UniRule"/>
</dbReference>
<dbReference type="GO" id="GO:0006281">
    <property type="term" value="P:DNA repair"/>
    <property type="evidence" value="ECO:0007669"/>
    <property type="project" value="UniProtKB-UniRule"/>
</dbReference>
<dbReference type="CDD" id="cd14332">
    <property type="entry name" value="UBA_RuvA_C"/>
    <property type="match status" value="1"/>
</dbReference>
<dbReference type="Gene3D" id="1.10.150.20">
    <property type="entry name" value="5' to 3' exonuclease, C-terminal subdomain"/>
    <property type="match status" value="1"/>
</dbReference>
<dbReference type="Gene3D" id="1.10.8.10">
    <property type="entry name" value="DNA helicase RuvA subunit, C-terminal domain"/>
    <property type="match status" value="1"/>
</dbReference>
<dbReference type="Gene3D" id="2.40.50.140">
    <property type="entry name" value="Nucleic acid-binding proteins"/>
    <property type="match status" value="1"/>
</dbReference>
<dbReference type="HAMAP" id="MF_00031">
    <property type="entry name" value="DNA_HJ_migration_RuvA"/>
    <property type="match status" value="1"/>
</dbReference>
<dbReference type="InterPro" id="IPR013849">
    <property type="entry name" value="DNA_helicase_Holl-junc_RuvA_I"/>
</dbReference>
<dbReference type="InterPro" id="IPR003583">
    <property type="entry name" value="Hlx-hairpin-Hlx_DNA-bd_motif"/>
</dbReference>
<dbReference type="InterPro" id="IPR012340">
    <property type="entry name" value="NA-bd_OB-fold"/>
</dbReference>
<dbReference type="InterPro" id="IPR000085">
    <property type="entry name" value="RuvA"/>
</dbReference>
<dbReference type="InterPro" id="IPR010994">
    <property type="entry name" value="RuvA_2-like"/>
</dbReference>
<dbReference type="InterPro" id="IPR011114">
    <property type="entry name" value="RuvA_C"/>
</dbReference>
<dbReference type="InterPro" id="IPR036267">
    <property type="entry name" value="RuvA_C_sf"/>
</dbReference>
<dbReference type="NCBIfam" id="TIGR00084">
    <property type="entry name" value="ruvA"/>
    <property type="match status" value="1"/>
</dbReference>
<dbReference type="Pfam" id="PF14520">
    <property type="entry name" value="HHH_5"/>
    <property type="match status" value="1"/>
</dbReference>
<dbReference type="Pfam" id="PF07499">
    <property type="entry name" value="RuvA_C"/>
    <property type="match status" value="1"/>
</dbReference>
<dbReference type="Pfam" id="PF01330">
    <property type="entry name" value="RuvA_N"/>
    <property type="match status" value="1"/>
</dbReference>
<dbReference type="SMART" id="SM00278">
    <property type="entry name" value="HhH1"/>
    <property type="match status" value="2"/>
</dbReference>
<dbReference type="SUPFAM" id="SSF46929">
    <property type="entry name" value="DNA helicase RuvA subunit, C-terminal domain"/>
    <property type="match status" value="1"/>
</dbReference>
<dbReference type="SUPFAM" id="SSF50249">
    <property type="entry name" value="Nucleic acid-binding proteins"/>
    <property type="match status" value="1"/>
</dbReference>
<dbReference type="SUPFAM" id="SSF47781">
    <property type="entry name" value="RuvA domain 2-like"/>
    <property type="match status" value="1"/>
</dbReference>
<name>RUVA_THET8</name>
<sequence>MIRYLRGLVLKKEAGGFVLLAGGVGFFLQAPTPFLQALEEGKEVGVHTHLLLKEEGLSLYGFPDEENLALFELLLSVSGVGPKVALALLSALPPRLLARALLEGDARLLTSASGVGRRLAERIALELKGKVPPHLLAGEKVESEAAEEAVMALAALGFKEAQARAVVLDLLAQNPKARAQDLIKEALKRLR</sequence>
<protein>
    <recommendedName>
        <fullName evidence="2 8">Holliday junction branch migration complex subunit RuvA</fullName>
    </recommendedName>
</protein>
<comment type="function">
    <text evidence="2">The RuvA-RuvB-RuvC complex processes Holliday junction (HJ) DNA during genetic recombination and DNA repair, while the RuvA-RuvB complex plays an important role in the rescue of blocked DNA replication forks via replication fork reversal (RFR). RuvA specifically binds to HJ cruciform DNA, conferring on it an open structure. The RuvB hexamer acts as an ATP-dependent pump, pulling dsDNA into and through the RuvAB complex. HJ branch migration allows RuvC to scan DNA until it finds its consensus sequence, where it cleaves and resolves the cruciform DNA.</text>
</comment>
<comment type="function">
    <text evidence="3 6">Binds Holliday junction (HJ) but not linear dsDNA. The RuvA-RuvB complex promotes HJ branch migration in an ATP-dependent manner; ATP-gamma-S does not allow migration. Stimulates the ATPase activity of RuvB in the presence of dsDNA.</text>
</comment>
<comment type="biophysicochemical properties">
    <temperatureDependence>
        <text evidence="3">Retains HJ-binding ability after an hour at 90 degrees Celsius.</text>
    </temperatureDependence>
</comment>
<comment type="subunit">
    <text evidence="2 3 4 5 6 9">Homotetramer; 2 tetramers associate head to head with an empty space between them large enough to hold a Holliday junction. Domain III interacts with RuvB (PubMed:12408833). Electron microscopic images suggest 2 closely interacting RuvA tetramers sandwich the HJ DNA; each RuvA tetramer associates with an RuvB hexamer (PubMed:12408833, PubMed:17981150, PubMed:18068124). Forms 2 complexes with Holliday junction (HJ) DNA which probably have 1 and 2 RuvA tetramers per complex (called complex I and complex II) (PubMed:11245216). Forms a complex with RuvB (Probable) (PubMed:12408833, PubMed:17981150). Each RuvB hexamer is contacted by two RuvA subunits (via domain III) on 2 adjacent RuvB subunits; this complex drives branch migration. In the full resolvosome a probable DNA-RuvA(4)-RuvB(12)-RuvC(2) complex forms which resolves the HJ.</text>
</comment>
<comment type="subcellular location">
    <subcellularLocation>
        <location evidence="2">Cytoplasm</location>
    </subcellularLocation>
</comment>
<comment type="domain">
    <text evidence="4">Has three domains with a flexible linker between the domains II and III, and assumes an 'L' shape. Domains I and II are responsible for tetramerization and subsequent octamerization. The flexible linker plus domain III (residues 129-191 in this study) interacts with RuvB.</text>
</comment>
<comment type="similarity">
    <text evidence="2">Belongs to the RuvA family.</text>
</comment>
<accession>Q9F1Q3</accession>
<accession>Q5SLK2</accession>
<organism>
    <name type="scientific">Thermus thermophilus (strain ATCC 27634 / DSM 579 / HB8)</name>
    <dbReference type="NCBI Taxonomy" id="300852"/>
    <lineage>
        <taxon>Bacteria</taxon>
        <taxon>Thermotogati</taxon>
        <taxon>Deinococcota</taxon>
        <taxon>Deinococci</taxon>
        <taxon>Thermales</taxon>
        <taxon>Thermaceae</taxon>
        <taxon>Thermus</taxon>
    </lineage>
</organism>
<proteinExistence type="evidence at protein level"/>
<evidence type="ECO:0000250" key="1">
    <source>
        <dbReference type="UniProtKB" id="P0A809"/>
    </source>
</evidence>
<evidence type="ECO:0000255" key="2">
    <source>
        <dbReference type="HAMAP-Rule" id="MF_00031"/>
    </source>
</evidence>
<evidence type="ECO:0000269" key="3">
    <source>
    </source>
</evidence>
<evidence type="ECO:0000269" key="4">
    <source>
    </source>
</evidence>
<evidence type="ECO:0000269" key="5">
    <source>
    </source>
</evidence>
<evidence type="ECO:0000269" key="6">
    <source>
    </source>
</evidence>
<evidence type="ECO:0000303" key="7">
    <source>
    </source>
</evidence>
<evidence type="ECO:0000303" key="8">
    <source>
    </source>
</evidence>
<evidence type="ECO:0000305" key="9">
    <source>
    </source>
</evidence>
<evidence type="ECO:0000312" key="10">
    <source>
        <dbReference type="EMBL" id="BAB18786.1"/>
    </source>
</evidence>
<evidence type="ECO:0000312" key="11">
    <source>
        <dbReference type="EMBL" id="BAD70114.1"/>
    </source>
</evidence>
<evidence type="ECO:0007744" key="12">
    <source>
        <dbReference type="PDB" id="1IXR"/>
    </source>
</evidence>
<evidence type="ECO:0007744" key="13">
    <source>
        <dbReference type="PDB" id="1IXS"/>
    </source>
</evidence>
<evidence type="ECO:0007829" key="14">
    <source>
        <dbReference type="PDB" id="1IXR"/>
    </source>
</evidence>
<evidence type="ECO:0007829" key="15">
    <source>
        <dbReference type="PDB" id="1IXS"/>
    </source>
</evidence>
<keyword id="KW-0002">3D-structure</keyword>
<keyword id="KW-0963">Cytoplasm</keyword>
<keyword id="KW-0227">DNA damage</keyword>
<keyword id="KW-0233">DNA recombination</keyword>
<keyword id="KW-0234">DNA repair</keyword>
<keyword id="KW-0238">DNA-binding</keyword>
<keyword id="KW-1185">Reference proteome</keyword>
<gene>
    <name evidence="2 7" type="primary">ruvA</name>
    <name type="ordered locus">TTHA0291</name>
</gene>